<comment type="function">
    <text evidence="1">DNA-dependent RNA polymerase catalyzes the transcription of DNA into RNA using the four ribonucleoside triphosphates as substrates.</text>
</comment>
<comment type="catalytic activity">
    <reaction evidence="1">
        <text>RNA(n) + a ribonucleoside 5'-triphosphate = RNA(n+1) + diphosphate</text>
        <dbReference type="Rhea" id="RHEA:21248"/>
        <dbReference type="Rhea" id="RHEA-COMP:14527"/>
        <dbReference type="Rhea" id="RHEA-COMP:17342"/>
        <dbReference type="ChEBI" id="CHEBI:33019"/>
        <dbReference type="ChEBI" id="CHEBI:61557"/>
        <dbReference type="ChEBI" id="CHEBI:140395"/>
        <dbReference type="EC" id="2.7.7.6"/>
    </reaction>
</comment>
<comment type="subunit">
    <text evidence="1">The RNAP catalytic core consists of 2 alpha, 1 beta, 1 beta' and 1 omega subunit. When a sigma factor is associated with the core the holoenzyme is formed, which can initiate transcription.</text>
</comment>
<comment type="similarity">
    <text evidence="1">Belongs to the RNA polymerase beta chain family.</text>
</comment>
<protein>
    <recommendedName>
        <fullName evidence="1">DNA-directed RNA polymerase subunit beta</fullName>
        <shortName evidence="1">RNAP subunit beta</shortName>
        <ecNumber evidence="1">2.7.7.6</ecNumber>
    </recommendedName>
    <alternativeName>
        <fullName evidence="1">RNA polymerase subunit beta</fullName>
    </alternativeName>
    <alternativeName>
        <fullName evidence="1">Transcriptase subunit beta</fullName>
    </alternativeName>
</protein>
<gene>
    <name evidence="1" type="primary">rpoB</name>
    <name type="ordered locus">BCE33L0096</name>
</gene>
<sequence length="1177" mass="131893">MTGQLVQYGRHRQRRSYARISEVLELPNLIEIQTSSYQWFLDEGLREMFQDISPIEDFTGNLSLEFIDYSLGEPKYSVDECKERDVTYAAPLRVKVRLINKETGEVKEQDVFMGDFPLMTETGTFVINGAERVIVSQLVRSPSVYYSGKVDKNGKRGFTATVIPNRGAWLEYETDAKDVVYVRIDRTRKLPVTVLLRALGFGSDQEITELLGDNEYLSNTLEKDNTDSTEKALLEIYERLRPGEPPTVENAKSLLVSRFFDPKRYDLANVGRYKINKKLHIKNRLFNQRLAETLVDPETGEILAAEGTILDRRTLDRILPYLEKNIGFKTAKPMGGVVEGDVELQSIKIYAPESEGERVINVIGNANITRDVKHITPGDILASISYFFNLLYKVGDTDDIDHLGNRRLRSVGELLQNQFRIGLSRMERVVRERMSIQDTNAITPQALINIRPVIASIKEFFGSSQLSQFMDQTNPLAELTHKRRLSALGPGGLTRERAGFEVRDVHYSHYGRMCPIETPEGPNIGLINSLSSFAKVNEFGFIETPYRRVDPETGLVTGHVDYLTADEEDNYVVAQANMKLSEEGEFLDEDIVARFRGENIVTNKERIDYMDVSPKQVVSAATACIPFLENDDSNRALMGANMQRQAVPLMNPESPIVGTGMEYVSAKDSGAAVICKHPGIVERVEAREVWVRRYVEVDGQTVKGDLDRYKMQKFIRSNQGTCYNQRPIVSVGNEVVKGEILADGPSMELGELALGRNVLVGFMTWDGYNYEDAIIMSERLVKDDVYTSIHIEEYESEARDTKLGPEEITRDIPNVGEDALRNLDERGIIRVGAEVKDGDLLVGKVTPKGVTELTAEERLLHAIFGEKAREVRDTSLRVPHGGGGIILDVKVFNREDGDELPPGVNQLVRAYIVQKRKISEGDKMAGRHGNKGVISRILPEEDMPYLPDGTPIDIMLNPLGVPSRMNIGQVLELHLGMAARYLGIHIATPVFDGAREEDVWGTIEEAGMANDAKTILYDGRTGEPFDNRVSVGVMYMIKLAHMVDDKLHARSTGPYSLVTQQPLGGKAQFGGQRFGEMEVWALEAYGAAYTLQEILTVKSDDVVGRVKTYEAIVKGENVPEPGVPESFKVLIKELQSLGMDVKMMSSDDTEIEMRDTEDDDDHQSADKLNVEVETTKE</sequence>
<organism>
    <name type="scientific">Bacillus cereus (strain ZK / E33L)</name>
    <dbReference type="NCBI Taxonomy" id="288681"/>
    <lineage>
        <taxon>Bacteria</taxon>
        <taxon>Bacillati</taxon>
        <taxon>Bacillota</taxon>
        <taxon>Bacilli</taxon>
        <taxon>Bacillales</taxon>
        <taxon>Bacillaceae</taxon>
        <taxon>Bacillus</taxon>
        <taxon>Bacillus cereus group</taxon>
    </lineage>
</organism>
<reference key="1">
    <citation type="journal article" date="2006" name="J. Bacteriol.">
        <title>Pathogenomic sequence analysis of Bacillus cereus and Bacillus thuringiensis isolates closely related to Bacillus anthracis.</title>
        <authorList>
            <person name="Han C.S."/>
            <person name="Xie G."/>
            <person name="Challacombe J.F."/>
            <person name="Altherr M.R."/>
            <person name="Bhotika S.S."/>
            <person name="Bruce D."/>
            <person name="Campbell C.S."/>
            <person name="Campbell M.L."/>
            <person name="Chen J."/>
            <person name="Chertkov O."/>
            <person name="Cleland C."/>
            <person name="Dimitrijevic M."/>
            <person name="Doggett N.A."/>
            <person name="Fawcett J.J."/>
            <person name="Glavina T."/>
            <person name="Goodwin L.A."/>
            <person name="Hill K.K."/>
            <person name="Hitchcock P."/>
            <person name="Jackson P.J."/>
            <person name="Keim P."/>
            <person name="Kewalramani A.R."/>
            <person name="Longmire J."/>
            <person name="Lucas S."/>
            <person name="Malfatti S."/>
            <person name="McMurry K."/>
            <person name="Meincke L.J."/>
            <person name="Misra M."/>
            <person name="Moseman B.L."/>
            <person name="Mundt M."/>
            <person name="Munk A.C."/>
            <person name="Okinaka R.T."/>
            <person name="Parson-Quintana B."/>
            <person name="Reilly L.P."/>
            <person name="Richardson P."/>
            <person name="Robinson D.L."/>
            <person name="Rubin E."/>
            <person name="Saunders E."/>
            <person name="Tapia R."/>
            <person name="Tesmer J.G."/>
            <person name="Thayer N."/>
            <person name="Thompson L.S."/>
            <person name="Tice H."/>
            <person name="Ticknor L.O."/>
            <person name="Wills P.L."/>
            <person name="Brettin T.S."/>
            <person name="Gilna P."/>
        </authorList>
    </citation>
    <scope>NUCLEOTIDE SEQUENCE [LARGE SCALE GENOMIC DNA]</scope>
    <source>
        <strain>ZK / E33L</strain>
    </source>
</reference>
<name>RPOB_BACCZ</name>
<proteinExistence type="inferred from homology"/>
<keyword id="KW-0240">DNA-directed RNA polymerase</keyword>
<keyword id="KW-0548">Nucleotidyltransferase</keyword>
<keyword id="KW-0804">Transcription</keyword>
<keyword id="KW-0808">Transferase</keyword>
<accession>Q63H98</accession>
<dbReference type="EC" id="2.7.7.6" evidence="1"/>
<dbReference type="EMBL" id="CP000001">
    <property type="protein sequence ID" value="AAU20135.1"/>
    <property type="molecule type" value="Genomic_DNA"/>
</dbReference>
<dbReference type="RefSeq" id="WP_000147554.1">
    <property type="nucleotide sequence ID" value="NZ_CP009968.1"/>
</dbReference>
<dbReference type="SMR" id="Q63H98"/>
<dbReference type="GeneID" id="75083383"/>
<dbReference type="KEGG" id="bcz:BCE33L0096"/>
<dbReference type="PATRIC" id="fig|288681.22.peg.55"/>
<dbReference type="Proteomes" id="UP000002612">
    <property type="component" value="Chromosome"/>
</dbReference>
<dbReference type="GO" id="GO:0000428">
    <property type="term" value="C:DNA-directed RNA polymerase complex"/>
    <property type="evidence" value="ECO:0007669"/>
    <property type="project" value="UniProtKB-KW"/>
</dbReference>
<dbReference type="GO" id="GO:0003677">
    <property type="term" value="F:DNA binding"/>
    <property type="evidence" value="ECO:0007669"/>
    <property type="project" value="UniProtKB-UniRule"/>
</dbReference>
<dbReference type="GO" id="GO:0003899">
    <property type="term" value="F:DNA-directed RNA polymerase activity"/>
    <property type="evidence" value="ECO:0007669"/>
    <property type="project" value="UniProtKB-UniRule"/>
</dbReference>
<dbReference type="GO" id="GO:0032549">
    <property type="term" value="F:ribonucleoside binding"/>
    <property type="evidence" value="ECO:0007669"/>
    <property type="project" value="InterPro"/>
</dbReference>
<dbReference type="GO" id="GO:0006351">
    <property type="term" value="P:DNA-templated transcription"/>
    <property type="evidence" value="ECO:0007669"/>
    <property type="project" value="UniProtKB-UniRule"/>
</dbReference>
<dbReference type="CDD" id="cd00653">
    <property type="entry name" value="RNA_pol_B_RPB2"/>
    <property type="match status" value="1"/>
</dbReference>
<dbReference type="FunFam" id="3.90.1800.10:FF:000001">
    <property type="entry name" value="DNA-directed RNA polymerase subunit beta"/>
    <property type="match status" value="1"/>
</dbReference>
<dbReference type="Gene3D" id="2.40.50.100">
    <property type="match status" value="1"/>
</dbReference>
<dbReference type="Gene3D" id="2.40.50.150">
    <property type="match status" value="1"/>
</dbReference>
<dbReference type="Gene3D" id="3.90.1100.10">
    <property type="match status" value="2"/>
</dbReference>
<dbReference type="Gene3D" id="2.30.150.10">
    <property type="entry name" value="DNA-directed RNA polymerase, beta subunit, external 1 domain"/>
    <property type="match status" value="1"/>
</dbReference>
<dbReference type="Gene3D" id="2.40.270.10">
    <property type="entry name" value="DNA-directed RNA polymerase, subunit 2, domain 6"/>
    <property type="match status" value="1"/>
</dbReference>
<dbReference type="Gene3D" id="3.90.1800.10">
    <property type="entry name" value="RNA polymerase alpha subunit dimerisation domain"/>
    <property type="match status" value="1"/>
</dbReference>
<dbReference type="Gene3D" id="3.90.1110.10">
    <property type="entry name" value="RNA polymerase Rpb2, domain 2"/>
    <property type="match status" value="1"/>
</dbReference>
<dbReference type="HAMAP" id="MF_01321">
    <property type="entry name" value="RNApol_bact_RpoB"/>
    <property type="match status" value="1"/>
</dbReference>
<dbReference type="InterPro" id="IPR042107">
    <property type="entry name" value="DNA-dir_RNA_pol_bsu_ext_1_sf"/>
</dbReference>
<dbReference type="InterPro" id="IPR019462">
    <property type="entry name" value="DNA-dir_RNA_pol_bsu_external_1"/>
</dbReference>
<dbReference type="InterPro" id="IPR015712">
    <property type="entry name" value="DNA-dir_RNA_pol_su2"/>
</dbReference>
<dbReference type="InterPro" id="IPR007120">
    <property type="entry name" value="DNA-dir_RNAP_su2_dom"/>
</dbReference>
<dbReference type="InterPro" id="IPR037033">
    <property type="entry name" value="DNA-dir_RNAP_su2_hyb_sf"/>
</dbReference>
<dbReference type="InterPro" id="IPR010243">
    <property type="entry name" value="RNA_pol_bsu_bac"/>
</dbReference>
<dbReference type="InterPro" id="IPR007121">
    <property type="entry name" value="RNA_pol_bsu_CS"/>
</dbReference>
<dbReference type="InterPro" id="IPR007644">
    <property type="entry name" value="RNA_pol_bsu_protrusion"/>
</dbReference>
<dbReference type="InterPro" id="IPR007642">
    <property type="entry name" value="RNA_pol_Rpb2_2"/>
</dbReference>
<dbReference type="InterPro" id="IPR037034">
    <property type="entry name" value="RNA_pol_Rpb2_2_sf"/>
</dbReference>
<dbReference type="InterPro" id="IPR007645">
    <property type="entry name" value="RNA_pol_Rpb2_3"/>
</dbReference>
<dbReference type="InterPro" id="IPR007641">
    <property type="entry name" value="RNA_pol_Rpb2_7"/>
</dbReference>
<dbReference type="InterPro" id="IPR014724">
    <property type="entry name" value="RNA_pol_RPB2_OB-fold"/>
</dbReference>
<dbReference type="NCBIfam" id="NF001616">
    <property type="entry name" value="PRK00405.1"/>
    <property type="match status" value="1"/>
</dbReference>
<dbReference type="NCBIfam" id="TIGR02013">
    <property type="entry name" value="rpoB"/>
    <property type="match status" value="1"/>
</dbReference>
<dbReference type="PANTHER" id="PTHR20856">
    <property type="entry name" value="DNA-DIRECTED RNA POLYMERASE I SUBUNIT 2"/>
    <property type="match status" value="1"/>
</dbReference>
<dbReference type="Pfam" id="PF04563">
    <property type="entry name" value="RNA_pol_Rpb2_1"/>
    <property type="match status" value="1"/>
</dbReference>
<dbReference type="Pfam" id="PF04561">
    <property type="entry name" value="RNA_pol_Rpb2_2"/>
    <property type="match status" value="2"/>
</dbReference>
<dbReference type="Pfam" id="PF04565">
    <property type="entry name" value="RNA_pol_Rpb2_3"/>
    <property type="match status" value="1"/>
</dbReference>
<dbReference type="Pfam" id="PF10385">
    <property type="entry name" value="RNA_pol_Rpb2_45"/>
    <property type="match status" value="1"/>
</dbReference>
<dbReference type="Pfam" id="PF00562">
    <property type="entry name" value="RNA_pol_Rpb2_6"/>
    <property type="match status" value="1"/>
</dbReference>
<dbReference type="Pfam" id="PF04560">
    <property type="entry name" value="RNA_pol_Rpb2_7"/>
    <property type="match status" value="1"/>
</dbReference>
<dbReference type="SUPFAM" id="SSF64484">
    <property type="entry name" value="beta and beta-prime subunits of DNA dependent RNA-polymerase"/>
    <property type="match status" value="1"/>
</dbReference>
<dbReference type="PROSITE" id="PS01166">
    <property type="entry name" value="RNA_POL_BETA"/>
    <property type="match status" value="1"/>
</dbReference>
<feature type="chain" id="PRO_0000224026" description="DNA-directed RNA polymerase subunit beta">
    <location>
        <begin position="1"/>
        <end position="1177"/>
    </location>
</feature>
<feature type="region of interest" description="Disordered" evidence="2">
    <location>
        <begin position="1147"/>
        <end position="1177"/>
    </location>
</feature>
<feature type="compositionally biased region" description="Acidic residues" evidence="2">
    <location>
        <begin position="1147"/>
        <end position="1161"/>
    </location>
</feature>
<feature type="compositionally biased region" description="Basic and acidic residues" evidence="2">
    <location>
        <begin position="1162"/>
        <end position="1177"/>
    </location>
</feature>
<evidence type="ECO:0000255" key="1">
    <source>
        <dbReference type="HAMAP-Rule" id="MF_01321"/>
    </source>
</evidence>
<evidence type="ECO:0000256" key="2">
    <source>
        <dbReference type="SAM" id="MobiDB-lite"/>
    </source>
</evidence>